<protein>
    <recommendedName>
        <fullName evidence="1">Adenine deaminase</fullName>
        <shortName evidence="1">Adenase</shortName>
        <shortName evidence="1">Adenine aminase</shortName>
        <ecNumber evidence="1">3.5.4.2</ecNumber>
    </recommendedName>
</protein>
<feature type="chain" id="PRO_1000215358" description="Adenine deaminase">
    <location>
        <begin position="1"/>
        <end position="599"/>
    </location>
</feature>
<sequence>MFNKFNTKPLWEVSKTLSSVAQGFEPADMVIINSRLINVCTREVIENTDVAISCGRIALVGDAKHCIGESTEVIDAKGQYIAPGFLDGHIHVESSMLSVSEYARSVVPHGTVGIYMDPHEICNVLGLNGVRYMIEDGKGTPLKNMVTTPSCVPAVPGFEDTGAAVGPEDVRETMKWDEIVGLGEMMNFPGILYSTDHAHGVVGETLKASKTVTGHYSLPETGKGLNGYIASGVRCCHESTRAEDALAKMRLGMYAMFREGSAWHDLKEVSKAITENKVDSRFAVLISDDTHPHTLLKDGHLDHIIKRAIEEGIEPLTAIQMVTINCAQCFQMDHELGSITPGKCADIVLIEDLKDVKITKVIIDGNLVAKDGVLTTSIAKYDYPEDAMHSMHIKDKITPASFNIMAQNKEKVTTRVIEIIPERVGTYERHIELNVKDDKVQCDPSKDVLKAVVFERHHETGKAGYGFVKGFGIKRGAMAATVAHDAHNLLVIGTNDEDMALAANTLIECGGGMVAVQDGKVLGLVPLPIAGLMSNKPLEEMAEMVEKLDSAWKEIGCDIVSPFMTMALIPLACLPELRLTNRGLVDCNKFEFVSLFIEE</sequence>
<reference key="1">
    <citation type="submission" date="2008-05" db="EMBL/GenBank/DDBJ databases">
        <title>Genome sequence of Clostridium botulinum Ba4 strain 657.</title>
        <authorList>
            <person name="Shrivastava S."/>
            <person name="Brown J.L."/>
            <person name="Bruce D."/>
            <person name="Detter C."/>
            <person name="Munk C."/>
            <person name="Smith L.A."/>
            <person name="Smith T.J."/>
            <person name="Sutton G."/>
            <person name="Brettin T.S."/>
        </authorList>
    </citation>
    <scope>NUCLEOTIDE SEQUENCE [LARGE SCALE GENOMIC DNA]</scope>
    <source>
        <strain>657 / Type Ba4</strain>
    </source>
</reference>
<proteinExistence type="inferred from homology"/>
<accession>C3KZB6</accession>
<evidence type="ECO:0000255" key="1">
    <source>
        <dbReference type="HAMAP-Rule" id="MF_01518"/>
    </source>
</evidence>
<gene>
    <name evidence="1" type="primary">ade</name>
    <name type="ordered locus">CLJ_B0349</name>
</gene>
<name>ADEC_CLOB6</name>
<dbReference type="EC" id="3.5.4.2" evidence="1"/>
<dbReference type="EMBL" id="CP001083">
    <property type="protein sequence ID" value="ACQ52836.1"/>
    <property type="molecule type" value="Genomic_DNA"/>
</dbReference>
<dbReference type="RefSeq" id="WP_003360406.1">
    <property type="nucleotide sequence ID" value="NC_012658.1"/>
</dbReference>
<dbReference type="SMR" id="C3KZB6"/>
<dbReference type="KEGG" id="cbi:CLJ_B0349"/>
<dbReference type="HOGENOM" id="CLU_027935_0_0_9"/>
<dbReference type="Proteomes" id="UP000002333">
    <property type="component" value="Chromosome"/>
</dbReference>
<dbReference type="GO" id="GO:0000034">
    <property type="term" value="F:adenine deaminase activity"/>
    <property type="evidence" value="ECO:0007669"/>
    <property type="project" value="UniProtKB-UniRule"/>
</dbReference>
<dbReference type="GO" id="GO:0006146">
    <property type="term" value="P:adenine catabolic process"/>
    <property type="evidence" value="ECO:0007669"/>
    <property type="project" value="InterPro"/>
</dbReference>
<dbReference type="CDD" id="cd01295">
    <property type="entry name" value="AdeC"/>
    <property type="match status" value="1"/>
</dbReference>
<dbReference type="FunFam" id="3.20.20.140:FF:000016">
    <property type="entry name" value="Adenine deaminase"/>
    <property type="match status" value="1"/>
</dbReference>
<dbReference type="Gene3D" id="3.20.20.140">
    <property type="entry name" value="Metal-dependent hydrolases"/>
    <property type="match status" value="1"/>
</dbReference>
<dbReference type="Gene3D" id="2.30.40.10">
    <property type="entry name" value="Urease, subunit C, domain 1"/>
    <property type="match status" value="1"/>
</dbReference>
<dbReference type="HAMAP" id="MF_01518">
    <property type="entry name" value="Adenine_deamin"/>
    <property type="match status" value="1"/>
</dbReference>
<dbReference type="InterPro" id="IPR006679">
    <property type="entry name" value="Adenine_deam"/>
</dbReference>
<dbReference type="InterPro" id="IPR026912">
    <property type="entry name" value="Adenine_deam_C"/>
</dbReference>
<dbReference type="InterPro" id="IPR006680">
    <property type="entry name" value="Amidohydro-rel"/>
</dbReference>
<dbReference type="InterPro" id="IPR011059">
    <property type="entry name" value="Metal-dep_hydrolase_composite"/>
</dbReference>
<dbReference type="InterPro" id="IPR032466">
    <property type="entry name" value="Metal_Hydrolase"/>
</dbReference>
<dbReference type="NCBIfam" id="TIGR01178">
    <property type="entry name" value="ade"/>
    <property type="match status" value="1"/>
</dbReference>
<dbReference type="PANTHER" id="PTHR11113:SF2">
    <property type="entry name" value="ADENINE DEAMINASE"/>
    <property type="match status" value="1"/>
</dbReference>
<dbReference type="PANTHER" id="PTHR11113">
    <property type="entry name" value="N-ACETYLGLUCOSAMINE-6-PHOSPHATE DEACETYLASE"/>
    <property type="match status" value="1"/>
</dbReference>
<dbReference type="Pfam" id="PF13382">
    <property type="entry name" value="Adenine_deam_C"/>
    <property type="match status" value="1"/>
</dbReference>
<dbReference type="Pfam" id="PF01979">
    <property type="entry name" value="Amidohydro_1"/>
    <property type="match status" value="1"/>
</dbReference>
<dbReference type="SUPFAM" id="SSF51338">
    <property type="entry name" value="Composite domain of metallo-dependent hydrolases"/>
    <property type="match status" value="1"/>
</dbReference>
<dbReference type="SUPFAM" id="SSF51556">
    <property type="entry name" value="Metallo-dependent hydrolases"/>
    <property type="match status" value="1"/>
</dbReference>
<comment type="catalytic activity">
    <reaction evidence="1">
        <text>adenine + H2O + H(+) = hypoxanthine + NH4(+)</text>
        <dbReference type="Rhea" id="RHEA:23688"/>
        <dbReference type="ChEBI" id="CHEBI:15377"/>
        <dbReference type="ChEBI" id="CHEBI:15378"/>
        <dbReference type="ChEBI" id="CHEBI:16708"/>
        <dbReference type="ChEBI" id="CHEBI:17368"/>
        <dbReference type="ChEBI" id="CHEBI:28938"/>
        <dbReference type="EC" id="3.5.4.2"/>
    </reaction>
</comment>
<comment type="cofactor">
    <cofactor evidence="1">
        <name>Mn(2+)</name>
        <dbReference type="ChEBI" id="CHEBI:29035"/>
    </cofactor>
</comment>
<comment type="similarity">
    <text evidence="1">Belongs to the metallo-dependent hydrolases superfamily. Adenine deaminase family.</text>
</comment>
<organism>
    <name type="scientific">Clostridium botulinum (strain 657 / Type Ba4)</name>
    <dbReference type="NCBI Taxonomy" id="515621"/>
    <lineage>
        <taxon>Bacteria</taxon>
        <taxon>Bacillati</taxon>
        <taxon>Bacillota</taxon>
        <taxon>Clostridia</taxon>
        <taxon>Eubacteriales</taxon>
        <taxon>Clostridiaceae</taxon>
        <taxon>Clostridium</taxon>
    </lineage>
</organism>
<keyword id="KW-0378">Hydrolase</keyword>
<keyword id="KW-0464">Manganese</keyword>